<organism>
    <name type="scientific">Prosthecochloris aestuarii (strain DSM 271 / SK 413)</name>
    <dbReference type="NCBI Taxonomy" id="290512"/>
    <lineage>
        <taxon>Bacteria</taxon>
        <taxon>Pseudomonadati</taxon>
        <taxon>Chlorobiota</taxon>
        <taxon>Chlorobiia</taxon>
        <taxon>Chlorobiales</taxon>
        <taxon>Chlorobiaceae</taxon>
        <taxon>Prosthecochloris</taxon>
    </lineage>
</organism>
<proteinExistence type="inferred from homology"/>
<evidence type="ECO:0000255" key="1">
    <source>
        <dbReference type="HAMAP-Rule" id="MF_00713"/>
    </source>
</evidence>
<protein>
    <recommendedName>
        <fullName evidence="1">Probable glycine dehydrogenase (decarboxylating) subunit 2</fullName>
        <ecNumber evidence="1">1.4.4.2</ecNumber>
    </recommendedName>
    <alternativeName>
        <fullName evidence="1">Glycine cleavage system P-protein subunit 2</fullName>
    </alternativeName>
    <alternativeName>
        <fullName evidence="1">Glycine decarboxylase subunit 2</fullName>
    </alternativeName>
    <alternativeName>
        <fullName evidence="1">Glycine dehydrogenase (aminomethyl-transferring) subunit 2</fullName>
    </alternativeName>
</protein>
<accession>B4S3N4</accession>
<reference key="1">
    <citation type="submission" date="2008-06" db="EMBL/GenBank/DDBJ databases">
        <title>Complete sequence of chromosome of Prosthecochloris aestuarii DSM 271.</title>
        <authorList>
            <consortium name="US DOE Joint Genome Institute"/>
            <person name="Lucas S."/>
            <person name="Copeland A."/>
            <person name="Lapidus A."/>
            <person name="Glavina del Rio T."/>
            <person name="Dalin E."/>
            <person name="Tice H."/>
            <person name="Bruce D."/>
            <person name="Goodwin L."/>
            <person name="Pitluck S."/>
            <person name="Schmutz J."/>
            <person name="Larimer F."/>
            <person name="Land M."/>
            <person name="Hauser L."/>
            <person name="Kyrpides N."/>
            <person name="Anderson I."/>
            <person name="Liu Z."/>
            <person name="Li T."/>
            <person name="Zhao F."/>
            <person name="Overmann J."/>
            <person name="Bryant D.A."/>
            <person name="Richardson P."/>
        </authorList>
    </citation>
    <scope>NUCLEOTIDE SEQUENCE [LARGE SCALE GENOMIC DNA]</scope>
    <source>
        <strain>DSM 271 / SK 413</strain>
    </source>
</reference>
<sequence>MKETLIFDLSRKGRQGHRIASLDIEPQPAINLIPEKFLRTEPADLPEVPESEVVRHFIRLSNLNHHVDKDMYPLGSCTMKYNPKINDQTADIAGFTSIHPLQPAETAQGTLQLMYELGEMLREIAGMAAITLQPAAGAHGELTGILMIRKYHDSRASKRTKLLVVDSAHGTNPASAALVGYDILSVKSNAEGRTDIEDLKAKLDENVAALMLTNPNTIGLFEKDIKEIEQLVHDNGSLLYMDGANMNALMGITRPGDMGFDIVHYNLHKTFSAPHGGGGPGSGPVGVCDKLKPYLPVPVIEKHDDGNTSRYTLTTDRPLSIGRMMNFYGNFSVMVRAYTYIRMLGAEGIRRVSENAIINANYLLSKLIDRYDLPYPKPVMHEFCLSGDRQKKQHNVRTLDIAKRLLDLGFHAPTIYFPLIVSEALMIEPTETETRETLDRFAEAMLQIADETENSPETVQNAPQFTPVKRLDEAQASRKLNICCPGC</sequence>
<gene>
    <name evidence="1" type="primary">gcvPB</name>
    <name type="ordered locus">Paes_0171</name>
</gene>
<comment type="function">
    <text evidence="1">The glycine cleavage system catalyzes the degradation of glycine. The P protein binds the alpha-amino group of glycine through its pyridoxal phosphate cofactor; CO(2) is released and the remaining methylamine moiety is then transferred to the lipoamide cofactor of the H protein.</text>
</comment>
<comment type="catalytic activity">
    <reaction evidence="1">
        <text>N(6)-[(R)-lipoyl]-L-lysyl-[glycine-cleavage complex H protein] + glycine + H(+) = N(6)-[(R)-S(8)-aminomethyldihydrolipoyl]-L-lysyl-[glycine-cleavage complex H protein] + CO2</text>
        <dbReference type="Rhea" id="RHEA:24304"/>
        <dbReference type="Rhea" id="RHEA-COMP:10494"/>
        <dbReference type="Rhea" id="RHEA-COMP:10495"/>
        <dbReference type="ChEBI" id="CHEBI:15378"/>
        <dbReference type="ChEBI" id="CHEBI:16526"/>
        <dbReference type="ChEBI" id="CHEBI:57305"/>
        <dbReference type="ChEBI" id="CHEBI:83099"/>
        <dbReference type="ChEBI" id="CHEBI:83143"/>
        <dbReference type="EC" id="1.4.4.2"/>
    </reaction>
</comment>
<comment type="cofactor">
    <cofactor evidence="1">
        <name>pyridoxal 5'-phosphate</name>
        <dbReference type="ChEBI" id="CHEBI:597326"/>
    </cofactor>
</comment>
<comment type="subunit">
    <text evidence="1">The glycine cleavage system is composed of four proteins: P, T, L and H. In this organism, the P 'protein' is a heterodimer of two subunits.</text>
</comment>
<comment type="similarity">
    <text evidence="1">Belongs to the GcvP family. C-terminal subunit subfamily.</text>
</comment>
<keyword id="KW-0560">Oxidoreductase</keyword>
<keyword id="KW-0663">Pyridoxal phosphate</keyword>
<feature type="chain" id="PRO_1000132504" description="Probable glycine dehydrogenase (decarboxylating) subunit 2">
    <location>
        <begin position="1"/>
        <end position="487"/>
    </location>
</feature>
<feature type="modified residue" description="N6-(pyridoxal phosphate)lysine" evidence="1">
    <location>
        <position position="269"/>
    </location>
</feature>
<dbReference type="EC" id="1.4.4.2" evidence="1"/>
<dbReference type="EMBL" id="CP001108">
    <property type="protein sequence ID" value="ACF45230.1"/>
    <property type="molecule type" value="Genomic_DNA"/>
</dbReference>
<dbReference type="RefSeq" id="WP_012504767.1">
    <property type="nucleotide sequence ID" value="NC_011059.1"/>
</dbReference>
<dbReference type="SMR" id="B4S3N4"/>
<dbReference type="STRING" id="290512.Paes_0171"/>
<dbReference type="KEGG" id="paa:Paes_0171"/>
<dbReference type="eggNOG" id="COG1003">
    <property type="taxonomic scope" value="Bacteria"/>
</dbReference>
<dbReference type="HOGENOM" id="CLU_004620_5_0_10"/>
<dbReference type="Proteomes" id="UP000002725">
    <property type="component" value="Chromosome"/>
</dbReference>
<dbReference type="GO" id="GO:0005829">
    <property type="term" value="C:cytosol"/>
    <property type="evidence" value="ECO:0007669"/>
    <property type="project" value="TreeGrafter"/>
</dbReference>
<dbReference type="GO" id="GO:0005960">
    <property type="term" value="C:glycine cleavage complex"/>
    <property type="evidence" value="ECO:0007669"/>
    <property type="project" value="TreeGrafter"/>
</dbReference>
<dbReference type="GO" id="GO:0016594">
    <property type="term" value="F:glycine binding"/>
    <property type="evidence" value="ECO:0007669"/>
    <property type="project" value="TreeGrafter"/>
</dbReference>
<dbReference type="GO" id="GO:0004375">
    <property type="term" value="F:glycine dehydrogenase (decarboxylating) activity"/>
    <property type="evidence" value="ECO:0007669"/>
    <property type="project" value="UniProtKB-EC"/>
</dbReference>
<dbReference type="GO" id="GO:0030170">
    <property type="term" value="F:pyridoxal phosphate binding"/>
    <property type="evidence" value="ECO:0007669"/>
    <property type="project" value="TreeGrafter"/>
</dbReference>
<dbReference type="GO" id="GO:0019464">
    <property type="term" value="P:glycine decarboxylation via glycine cleavage system"/>
    <property type="evidence" value="ECO:0007669"/>
    <property type="project" value="UniProtKB-UniRule"/>
</dbReference>
<dbReference type="CDD" id="cd00613">
    <property type="entry name" value="GDC-P"/>
    <property type="match status" value="1"/>
</dbReference>
<dbReference type="FunFam" id="3.40.640.10:FF:000224">
    <property type="entry name" value="Probable glycine dehydrogenase (decarboxylating) subunit 2"/>
    <property type="match status" value="1"/>
</dbReference>
<dbReference type="FunFam" id="3.90.1150.10:FF:000014">
    <property type="entry name" value="Probable glycine dehydrogenase (decarboxylating) subunit 2"/>
    <property type="match status" value="1"/>
</dbReference>
<dbReference type="Gene3D" id="6.20.440.10">
    <property type="match status" value="1"/>
</dbReference>
<dbReference type="Gene3D" id="3.90.1150.10">
    <property type="entry name" value="Aspartate Aminotransferase, domain 1"/>
    <property type="match status" value="1"/>
</dbReference>
<dbReference type="Gene3D" id="3.40.640.10">
    <property type="entry name" value="Type I PLP-dependent aspartate aminotransferase-like (Major domain)"/>
    <property type="match status" value="1"/>
</dbReference>
<dbReference type="HAMAP" id="MF_00713">
    <property type="entry name" value="GcvPB"/>
    <property type="match status" value="1"/>
</dbReference>
<dbReference type="InterPro" id="IPR000192">
    <property type="entry name" value="Aminotrans_V_dom"/>
</dbReference>
<dbReference type="InterPro" id="IPR023012">
    <property type="entry name" value="GcvPB"/>
</dbReference>
<dbReference type="InterPro" id="IPR049316">
    <property type="entry name" value="GDC-P_C"/>
</dbReference>
<dbReference type="InterPro" id="IPR020581">
    <property type="entry name" value="GDC_P"/>
</dbReference>
<dbReference type="InterPro" id="IPR015424">
    <property type="entry name" value="PyrdxlP-dep_Trfase"/>
</dbReference>
<dbReference type="InterPro" id="IPR015421">
    <property type="entry name" value="PyrdxlP-dep_Trfase_major"/>
</dbReference>
<dbReference type="InterPro" id="IPR015422">
    <property type="entry name" value="PyrdxlP-dep_Trfase_small"/>
</dbReference>
<dbReference type="NCBIfam" id="NF003346">
    <property type="entry name" value="PRK04366.1"/>
    <property type="match status" value="1"/>
</dbReference>
<dbReference type="PANTHER" id="PTHR11773:SF1">
    <property type="entry name" value="GLYCINE DEHYDROGENASE (DECARBOXYLATING), MITOCHONDRIAL"/>
    <property type="match status" value="1"/>
</dbReference>
<dbReference type="PANTHER" id="PTHR11773">
    <property type="entry name" value="GLYCINE DEHYDROGENASE, DECARBOXYLATING"/>
    <property type="match status" value="1"/>
</dbReference>
<dbReference type="Pfam" id="PF00266">
    <property type="entry name" value="Aminotran_5"/>
    <property type="match status" value="1"/>
</dbReference>
<dbReference type="Pfam" id="PF21478">
    <property type="entry name" value="GcvP2_C"/>
    <property type="match status" value="1"/>
</dbReference>
<dbReference type="SUPFAM" id="SSF53383">
    <property type="entry name" value="PLP-dependent transferases"/>
    <property type="match status" value="1"/>
</dbReference>
<name>GCSPB_PROA2</name>